<proteinExistence type="evidence at protein level"/>
<accession>P36397</accession>
<accession>Q7G9L3</accession>
<organism>
    <name type="scientific">Arabidopsis thaliana</name>
    <name type="common">Mouse-ear cress</name>
    <dbReference type="NCBI Taxonomy" id="3702"/>
    <lineage>
        <taxon>Eukaryota</taxon>
        <taxon>Viridiplantae</taxon>
        <taxon>Streptophyta</taxon>
        <taxon>Embryophyta</taxon>
        <taxon>Tracheophyta</taxon>
        <taxon>Spermatophyta</taxon>
        <taxon>Magnoliopsida</taxon>
        <taxon>eudicotyledons</taxon>
        <taxon>Gunneridae</taxon>
        <taxon>Pentapetalae</taxon>
        <taxon>rosids</taxon>
        <taxon>malvids</taxon>
        <taxon>Brassicales</taxon>
        <taxon>Brassicaceae</taxon>
        <taxon>Camelineae</taxon>
        <taxon>Arabidopsis</taxon>
    </lineage>
</organism>
<keyword id="KW-0002">3D-structure</keyword>
<keyword id="KW-0927">Auxin signaling pathway</keyword>
<keyword id="KW-0967">Endosome</keyword>
<keyword id="KW-0931">ER-Golgi transport</keyword>
<keyword id="KW-0333">Golgi apparatus</keyword>
<keyword id="KW-0342">GTP-binding</keyword>
<keyword id="KW-0378">Hydrolase</keyword>
<keyword id="KW-0449">Lipoprotein</keyword>
<keyword id="KW-0519">Myristate</keyword>
<keyword id="KW-0547">Nucleotide-binding</keyword>
<keyword id="KW-0653">Protein transport</keyword>
<keyword id="KW-1185">Reference proteome</keyword>
<keyword id="KW-0813">Transport</keyword>
<reference key="1">
    <citation type="journal article" date="1993" name="FEBS Lett.">
        <title>cDNA cloning and expression of an Arabidopsis GTP-binding protein of the ARF family.</title>
        <authorList>
            <person name="Regad F."/>
            <person name="Bardet C."/>
            <person name="Tremousaygue D."/>
            <person name="Moisan A."/>
            <person name="Lescure B."/>
            <person name="Axelos M."/>
        </authorList>
    </citation>
    <scope>NUCLEOTIDE SEQUENCE [MRNA]</scope>
    <source>
        <strain>cv. Columbia</strain>
    </source>
</reference>
<reference key="2">
    <citation type="journal article" date="1999" name="Nature">
        <title>Sequence and analysis of chromosome 2 of the plant Arabidopsis thaliana.</title>
        <authorList>
            <person name="Lin X."/>
            <person name="Kaul S."/>
            <person name="Rounsley S.D."/>
            <person name="Shea T.P."/>
            <person name="Benito M.-I."/>
            <person name="Town C.D."/>
            <person name="Fujii C.Y."/>
            <person name="Mason T.M."/>
            <person name="Bowman C.L."/>
            <person name="Barnstead M.E."/>
            <person name="Feldblyum T.V."/>
            <person name="Buell C.R."/>
            <person name="Ketchum K.A."/>
            <person name="Lee J.J."/>
            <person name="Ronning C.M."/>
            <person name="Koo H.L."/>
            <person name="Moffat K.S."/>
            <person name="Cronin L.A."/>
            <person name="Shen M."/>
            <person name="Pai G."/>
            <person name="Van Aken S."/>
            <person name="Umayam L."/>
            <person name="Tallon L.J."/>
            <person name="Gill J.E."/>
            <person name="Adams M.D."/>
            <person name="Carrera A.J."/>
            <person name="Creasy T.H."/>
            <person name="Goodman H.M."/>
            <person name="Somerville C.R."/>
            <person name="Copenhaver G.P."/>
            <person name="Preuss D."/>
            <person name="Nierman W.C."/>
            <person name="White O."/>
            <person name="Eisen J.A."/>
            <person name="Salzberg S.L."/>
            <person name="Fraser C.M."/>
            <person name="Venter J.C."/>
        </authorList>
    </citation>
    <scope>NUCLEOTIDE SEQUENCE [LARGE SCALE GENOMIC DNA]</scope>
    <source>
        <strain>cv. Columbia</strain>
    </source>
</reference>
<reference key="3">
    <citation type="journal article" date="2017" name="Plant J.">
        <title>Araport11: a complete reannotation of the Arabidopsis thaliana reference genome.</title>
        <authorList>
            <person name="Cheng C.Y."/>
            <person name="Krishnakumar V."/>
            <person name="Chan A.P."/>
            <person name="Thibaud-Nissen F."/>
            <person name="Schobel S."/>
            <person name="Town C.D."/>
        </authorList>
    </citation>
    <scope>GENOME REANNOTATION</scope>
    <source>
        <strain>cv. Columbia</strain>
    </source>
</reference>
<reference key="4">
    <citation type="journal article" date="2003" name="Science">
        <title>Empirical analysis of transcriptional activity in the Arabidopsis genome.</title>
        <authorList>
            <person name="Yamada K."/>
            <person name="Lim J."/>
            <person name="Dale J.M."/>
            <person name="Chen H."/>
            <person name="Shinn P."/>
            <person name="Palm C.J."/>
            <person name="Southwick A.M."/>
            <person name="Wu H.C."/>
            <person name="Kim C.J."/>
            <person name="Nguyen M."/>
            <person name="Pham P.K."/>
            <person name="Cheuk R.F."/>
            <person name="Karlin-Newmann G."/>
            <person name="Liu S.X."/>
            <person name="Lam B."/>
            <person name="Sakano H."/>
            <person name="Wu T."/>
            <person name="Yu G."/>
            <person name="Miranda M."/>
            <person name="Quach H.L."/>
            <person name="Tripp M."/>
            <person name="Chang C.H."/>
            <person name="Lee J.M."/>
            <person name="Toriumi M.J."/>
            <person name="Chan M.M."/>
            <person name="Tang C.C."/>
            <person name="Onodera C.S."/>
            <person name="Deng J.M."/>
            <person name="Akiyama K."/>
            <person name="Ansari Y."/>
            <person name="Arakawa T."/>
            <person name="Banh J."/>
            <person name="Banno F."/>
            <person name="Bowser L."/>
            <person name="Brooks S.Y."/>
            <person name="Carninci P."/>
            <person name="Chao Q."/>
            <person name="Choy N."/>
            <person name="Enju A."/>
            <person name="Goldsmith A.D."/>
            <person name="Gurjal M."/>
            <person name="Hansen N.F."/>
            <person name="Hayashizaki Y."/>
            <person name="Johnson-Hopson C."/>
            <person name="Hsuan V.W."/>
            <person name="Iida K."/>
            <person name="Karnes M."/>
            <person name="Khan S."/>
            <person name="Koesema E."/>
            <person name="Ishida J."/>
            <person name="Jiang P.X."/>
            <person name="Jones T."/>
            <person name="Kawai J."/>
            <person name="Kamiya A."/>
            <person name="Meyers C."/>
            <person name="Nakajima M."/>
            <person name="Narusaka M."/>
            <person name="Seki M."/>
            <person name="Sakurai T."/>
            <person name="Satou M."/>
            <person name="Tamse R."/>
            <person name="Vaysberg M."/>
            <person name="Wallender E.K."/>
            <person name="Wong C."/>
            <person name="Yamamura Y."/>
            <person name="Yuan S."/>
            <person name="Shinozaki K."/>
            <person name="Davis R.W."/>
            <person name="Theologis A."/>
            <person name="Ecker J.R."/>
        </authorList>
    </citation>
    <scope>NUCLEOTIDE SEQUENCE [LARGE SCALE MRNA]</scope>
    <source>
        <strain>cv. Columbia</strain>
    </source>
</reference>
<reference key="5">
    <citation type="submission" date="2002-03" db="EMBL/GenBank/DDBJ databases">
        <title>Full-length cDNA from Arabidopsis thaliana.</title>
        <authorList>
            <person name="Brover V.V."/>
            <person name="Troukhan M.E."/>
            <person name="Alexandrov N.A."/>
            <person name="Lu Y.-P."/>
            <person name="Flavell R.B."/>
            <person name="Feldmann K.A."/>
        </authorList>
    </citation>
    <scope>NUCLEOTIDE SEQUENCE [LARGE SCALE MRNA]</scope>
</reference>
<reference key="6">
    <citation type="journal article" date="2000" name="Plant Cell">
        <title>In situ localization and in vitro induction of plant COPI-coated vesicles.</title>
        <authorList>
            <person name="Pimpl P."/>
            <person name="Movafeghi A."/>
            <person name="Coughlan S."/>
            <person name="Denecke J."/>
            <person name="Hillmer S."/>
            <person name="Robinson D.G."/>
        </authorList>
    </citation>
    <scope>SUBCELLULAR LOCATION</scope>
</reference>
<reference key="7">
    <citation type="journal article" date="2002" name="Plant Physiol.">
        <title>ADP-ribosylation factor 1 of Arabidopsis plays a critical role in intracellular trafficking and maintenance of endoplasmic reticulum morphology in Arabidopsis.</title>
        <authorList>
            <person name="Lee M.H."/>
            <person name="Min M.K."/>
            <person name="Lee Y.J."/>
            <person name="Jin J.B."/>
            <person name="Shin D.H."/>
            <person name="Kim D.H."/>
            <person name="Lee K.-H."/>
            <person name="Hwang I."/>
        </authorList>
    </citation>
    <scope>MUTAGENESIS OF THR-31</scope>
    <scope>FUNCTION</scope>
</reference>
<reference key="8">
    <citation type="journal article" date="2002" name="Plant J.">
        <title>Arf1 GTPase plays roles in the protein traffic between the endoplasmic reticulum and the Golgi apparatus in tobacco and Arabidopsis cultured cells.</title>
        <authorList>
            <person name="Takeuchi M."/>
            <person name="Ueda T."/>
            <person name="Yahara N."/>
            <person name="Nakano A."/>
        </authorList>
    </citation>
    <scope>MUTAGENESIS OF THR-31 AND GLN-71</scope>
    <scope>FUNCTION</scope>
</reference>
<reference key="9">
    <citation type="journal article" date="2003" name="Plant Cell">
        <title>The GTPase ARF1p controls the sequence-specific vacuolar sorting route to the lytic vacuole.</title>
        <authorList>
            <person name="Pimpl P."/>
            <person name="Hanton S.L."/>
            <person name="Taylor J.P."/>
            <person name="Pinto-daSilva L.L."/>
            <person name="Denecke J."/>
        </authorList>
    </citation>
    <scope>MUTAGENESIS OF THR-31 AND GLN-71</scope>
    <scope>FUNCTION</scope>
</reference>
<reference key="10">
    <citation type="journal article" date="2004" name="Plant J.">
        <title>Sorting signals in the cytosolic tail of membrane proteins involved in the interaction with plant ARF1 and coatomer.</title>
        <authorList>
            <person name="Contreras I."/>
            <person name="Ortiz-Zapater E."/>
            <person name="Aniento F."/>
        </authorList>
    </citation>
    <scope>INTERACTION WITH P24 PROTEINS</scope>
</reference>
<reference key="11">
    <citation type="journal article" date="2005" name="Plant Cell">
        <title>Dissection of Arabidopsis ADP-RIBOSYLATION FACTOR 1 function in epidermal cell polarity.</title>
        <authorList>
            <person name="Xu J."/>
            <person name="Scheres B."/>
        </authorList>
    </citation>
    <scope>FUNCTION</scope>
    <scope>SUBCELLULAR LOCATION</scope>
</reference>
<reference key="12">
    <citation type="journal article" date="2006" name="Plant Physiol.">
        <title>RPA, a class II ARFGAP protein, activates ARF1 and U5 and plays a role in root hair development in Arabidopsis.</title>
        <authorList>
            <person name="Song X.-F."/>
            <person name="Yang C.-Y."/>
            <person name="Liu J."/>
            <person name="Yang W.-C."/>
        </authorList>
    </citation>
    <scope>ACTIVITY REGULATION</scope>
</reference>
<reference key="13">
    <citation type="journal article" date="2007" name="Plant Physiol.">
        <title>Overexpression of Arabidopsis AGD7 causes relocation of Golgi-localized proteins to the endoplasmic reticulum and inhibits protein trafficking in plant cells.</title>
        <authorList>
            <person name="Min M.K."/>
            <person name="Kim S.J."/>
            <person name="Miao Y."/>
            <person name="Shin J."/>
            <person name="Jiang L."/>
            <person name="Hwang I."/>
        </authorList>
    </citation>
    <scope>INTERACTION WITH AGD7</scope>
    <scope>ACTIVITY REGULATION</scope>
</reference>
<reference key="14">
    <citation type="journal article" date="2007" name="Plant Physiol.">
        <title>Multiple roles of ADP-ribosylation factor 1 in plant cells include spatially regulated recruitment of coatomer and elements of the Golgi matrix.</title>
        <authorList>
            <person name="Matheson L.A."/>
            <person name="Hanton S.L."/>
            <person name="Rossi M."/>
            <person name="Latijnhouwers M."/>
            <person name="Stefano G."/>
            <person name="Renna L."/>
            <person name="Brandizzi F."/>
        </authorList>
    </citation>
    <scope>INTERACTION WITH GDAP1</scope>
    <scope>FUNCTION</scope>
</reference>
<reference key="15">
    <citation type="journal article" date="2010" name="Plant J.">
        <title>AGD5 is a GTPase-activating protein at the trans-Golgi network.</title>
        <authorList>
            <person name="Stefano G."/>
            <person name="Renna L."/>
            <person name="Rossi M."/>
            <person name="Azzarello E."/>
            <person name="Pollastri S."/>
            <person name="Brandizzi F."/>
            <person name="Baluska F."/>
            <person name="Mancuso S."/>
        </authorList>
    </citation>
    <scope>SUBCELLULAR LOCATION</scope>
    <scope>INTERACTION WITH AGD5</scope>
    <source>
        <strain>cv. Columbia</strain>
    </source>
</reference>
<reference key="16">
    <citation type="journal article" date="2014" name="Plant Cell Physiol.">
        <title>BEX1/ARF1A1C is required for BFA-sensitive recycling of PIN auxin transporters and auxin-mediated development in Arabidopsis.</title>
        <authorList>
            <person name="Tanaka H."/>
            <person name="Nodzylski T."/>
            <person name="Kitakura S."/>
            <person name="Feraru M.I."/>
            <person name="Sasabe M."/>
            <person name="Ishikawa T."/>
            <person name="Kleine-Vehn J."/>
            <person name="Kakimoto T."/>
            <person name="Friml J."/>
        </authorList>
    </citation>
    <scope>FUNCTION</scope>
    <scope>MUTAGENESIS OF LEU-34</scope>
    <scope>SUBCELLULAR LOCATION</scope>
    <source>
        <strain>cv. Columbia</strain>
    </source>
</reference>
<reference key="17">
    <citation type="journal article" date="2011" name="Genes Dev.">
        <title>Molecular insights into plant cell proliferation disturbance by Agrobacterium protein 6b.</title>
        <authorList>
            <person name="Wang M."/>
            <person name="Soyano T."/>
            <person name="Machida S."/>
            <person name="Yang J.-Y."/>
            <person name="Jung C."/>
            <person name="Chua N.-H."/>
            <person name="Yuan Y.A."/>
        </authorList>
    </citation>
    <scope>X-RAY CRYSTALLOGRAPHY (1.80 ANGSTROMS) IN COMPLEX WITH GTP</scope>
    <scope>INTERACTION WITH A.TUMEFACIENS AK6B</scope>
    <source>
        <strain>cv. Columbia</strain>
    </source>
</reference>
<gene>
    <name evidence="16" type="primary">ARF1</name>
    <name evidence="17" type="synonym">ARF1A1C</name>
    <name evidence="18" type="synonym">BEX1</name>
    <name evidence="20" type="ordered locus">At2g47170</name>
    <name evidence="22" type="ORF">T3D7.2</name>
    <name evidence="21" type="ORF">T8I13.1</name>
</gene>
<sequence length="181" mass="20609">MGLSFGKLFSRLFAKKEMRILMVGLDAAGKTTILYKLKLGEIVTTIPTIGFNVETVEYKNISFTVWDVGGQDKIRPLWRHYFQNTQGLIFVVDSNDRDRVVEARDELHRMLNEDELRDAVLLVFANKQDLPNAMNAAEITDKLGLHSLRQRHWYIQSTCATSGEGLYEGLDWLSNNIASKA</sequence>
<comment type="function">
    <text evidence="5 6 7 9 12 15">GTP-binding protein involved in protein trafficking; required for the sequence-specific vacuolar sorting route to the lytic vacuole, for the ER-to-Golgi transport and for the Golgi-derived transport to the plasma membrane (PubMed:24369434). Involved in the recruitment of COPI and GDAP1 to membranes. Required for recycling of PIN auxin transporters (e.g. PIN1 and PIN2) in a fungal toxin brefeldin A (BFA)-dependent manner. Involved in various auxin-dependent developmental processes (PubMed:24369434).</text>
</comment>
<comment type="catalytic activity">
    <reaction evidence="2">
        <text>GTP + H2O = GDP + phosphate + H(+)</text>
        <dbReference type="Rhea" id="RHEA:19669"/>
        <dbReference type="ChEBI" id="CHEBI:15377"/>
        <dbReference type="ChEBI" id="CHEBI:15378"/>
        <dbReference type="ChEBI" id="CHEBI:37565"/>
        <dbReference type="ChEBI" id="CHEBI:43474"/>
        <dbReference type="ChEBI" id="CHEBI:58189"/>
        <dbReference type="EC" id="3.6.5.2"/>
    </reaction>
</comment>
<comment type="activity regulation">
    <text evidence="10 11">Activated by AGD7 and AGD10.</text>
</comment>
<comment type="subunit">
    <text evidence="8 11 12 13 14">Interacts with AGD7 and GDAP1. GDP-locked form interacts with cytosolic tail of p24 proteins. Interacts with AGD5 at trans-Golgi network (PubMed:21105926). Interacts with A.tumefaciens AK6b (PubMed:21156810).</text>
</comment>
<comment type="subcellular location">
    <subcellularLocation>
        <location evidence="4 9 15">Golgi apparatus</location>
    </subcellularLocation>
    <subcellularLocation>
        <location evidence="4 9">Endosome</location>
    </subcellularLocation>
    <subcellularLocation>
        <location evidence="13 15">Golgi apparatus</location>
        <location evidence="13 15">trans-Golgi network</location>
    </subcellularLocation>
    <subcellularLocation>
        <location evidence="15">Early endosome</location>
    </subcellularLocation>
    <text evidence="13">Colocalizes with AGD5 at trans-Golgi network.</text>
</comment>
<comment type="similarity">
    <text evidence="19">Belongs to the small GTPase superfamily. Arf family.</text>
</comment>
<feature type="initiator methionine" description="Removed" evidence="3">
    <location>
        <position position="1"/>
    </location>
</feature>
<feature type="chain" id="PRO_0000207426" description="ADP-ribosylation factor 1">
    <location>
        <begin position="2"/>
        <end position="181"/>
    </location>
</feature>
<feature type="binding site" evidence="14 23">
    <location>
        <begin position="24"/>
        <end position="31"/>
    </location>
    <ligand>
        <name>GTP</name>
        <dbReference type="ChEBI" id="CHEBI:37565"/>
    </ligand>
</feature>
<feature type="binding site" evidence="1">
    <location>
        <begin position="67"/>
        <end position="71"/>
    </location>
    <ligand>
        <name>GTP</name>
        <dbReference type="ChEBI" id="CHEBI:37565"/>
    </ligand>
</feature>
<feature type="binding site" evidence="14 23">
    <location>
        <begin position="126"/>
        <end position="129"/>
    </location>
    <ligand>
        <name>GTP</name>
        <dbReference type="ChEBI" id="CHEBI:37565"/>
    </ligand>
</feature>
<feature type="lipid moiety-binding region" description="N-myristoyl glycine" evidence="3">
    <location>
        <position position="2"/>
    </location>
</feature>
<feature type="mutagenesis site" description="Constitutively inactive form (GDP-locked form); loss of intracellular protein trafficking." evidence="5 6 7">
    <original>T</original>
    <variation>N</variation>
    <location>
        <position position="31"/>
    </location>
</feature>
<feature type="mutagenesis site" description="In bex1; hypersensitivity to the fungal toxin brefeldin A (BFA) leading to developmental defects (including embryonic patterning defects, root bending and growth arrest) and impaired plasma membrane localization of PIN auxin transporters (e.g. PIN1 and PIN2), thus conferring abnormal auxin response gradient. Normal subcellular localization." evidence="15">
    <original>L</original>
    <variation>F</variation>
    <location>
        <position position="34"/>
    </location>
</feature>
<feature type="mutagenesis site" description="Constitutively active form (GTP-locked form)." evidence="6 7">
    <original>Q</original>
    <variation>L</variation>
    <location>
        <position position="71"/>
    </location>
</feature>
<feature type="helix" evidence="24">
    <location>
        <begin position="5"/>
        <end position="9"/>
    </location>
</feature>
<feature type="helix" evidence="24">
    <location>
        <begin position="10"/>
        <end position="12"/>
    </location>
</feature>
<feature type="strand" evidence="24">
    <location>
        <begin position="17"/>
        <end position="25"/>
    </location>
</feature>
<feature type="helix" evidence="24">
    <location>
        <begin position="30"/>
        <end position="37"/>
    </location>
</feature>
<feature type="strand" evidence="24">
    <location>
        <begin position="42"/>
        <end position="48"/>
    </location>
</feature>
<feature type="strand" evidence="24">
    <location>
        <begin position="51"/>
        <end position="58"/>
    </location>
</feature>
<feature type="strand" evidence="24">
    <location>
        <begin position="61"/>
        <end position="68"/>
    </location>
</feature>
<feature type="helix" evidence="24">
    <location>
        <begin position="79"/>
        <end position="84"/>
    </location>
</feature>
<feature type="strand" evidence="24">
    <location>
        <begin position="85"/>
        <end position="93"/>
    </location>
</feature>
<feature type="helix" evidence="24">
    <location>
        <begin position="97"/>
        <end position="99"/>
    </location>
</feature>
<feature type="helix" evidence="24">
    <location>
        <begin position="100"/>
        <end position="111"/>
    </location>
</feature>
<feature type="helix" evidence="24">
    <location>
        <begin position="114"/>
        <end position="116"/>
    </location>
</feature>
<feature type="strand" evidence="24">
    <location>
        <begin position="120"/>
        <end position="126"/>
    </location>
</feature>
<feature type="helix" evidence="24">
    <location>
        <begin position="136"/>
        <end position="142"/>
    </location>
</feature>
<feature type="helix" evidence="24">
    <location>
        <begin position="145"/>
        <end position="147"/>
    </location>
</feature>
<feature type="strand" evidence="24">
    <location>
        <begin position="153"/>
        <end position="157"/>
    </location>
</feature>
<feature type="turn" evidence="24">
    <location>
        <begin position="160"/>
        <end position="163"/>
    </location>
</feature>
<feature type="helix" evidence="24">
    <location>
        <begin position="166"/>
        <end position="178"/>
    </location>
</feature>
<name>ARF1_ARATH</name>
<protein>
    <recommendedName>
        <fullName evidence="16">ADP-ribosylation factor 1</fullName>
        <shortName evidence="16">AtARF1</shortName>
        <ecNumber evidence="2">3.6.5.2</ecNumber>
    </recommendedName>
    <alternativeName>
        <fullName evidence="18">Protein BFA-VISUALIZED EXOCYTIC TRAFFICKING DEFECTIVE 1</fullName>
    </alternativeName>
</protein>
<evidence type="ECO:0000250" key="1"/>
<evidence type="ECO:0000250" key="2">
    <source>
        <dbReference type="UniProtKB" id="P84077"/>
    </source>
</evidence>
<evidence type="ECO:0000255" key="3"/>
<evidence type="ECO:0000269" key="4">
    <source>
    </source>
</evidence>
<evidence type="ECO:0000269" key="5">
    <source>
    </source>
</evidence>
<evidence type="ECO:0000269" key="6">
    <source>
    </source>
</evidence>
<evidence type="ECO:0000269" key="7">
    <source>
    </source>
</evidence>
<evidence type="ECO:0000269" key="8">
    <source>
    </source>
</evidence>
<evidence type="ECO:0000269" key="9">
    <source>
    </source>
</evidence>
<evidence type="ECO:0000269" key="10">
    <source>
    </source>
</evidence>
<evidence type="ECO:0000269" key="11">
    <source>
    </source>
</evidence>
<evidence type="ECO:0000269" key="12">
    <source>
    </source>
</evidence>
<evidence type="ECO:0000269" key="13">
    <source>
    </source>
</evidence>
<evidence type="ECO:0000269" key="14">
    <source>
    </source>
</evidence>
<evidence type="ECO:0000269" key="15">
    <source>
    </source>
</evidence>
<evidence type="ECO:0000303" key="16">
    <source>
    </source>
</evidence>
<evidence type="ECO:0000303" key="17">
    <source>
    </source>
</evidence>
<evidence type="ECO:0000303" key="18">
    <source>
    </source>
</evidence>
<evidence type="ECO:0000305" key="19"/>
<evidence type="ECO:0000312" key="20">
    <source>
        <dbReference type="Araport" id="AT2G47170"/>
    </source>
</evidence>
<evidence type="ECO:0000312" key="21">
    <source>
        <dbReference type="EMBL" id="AAB63817.1"/>
    </source>
</evidence>
<evidence type="ECO:0000312" key="22">
    <source>
        <dbReference type="EMBL" id="AAM15469.1"/>
    </source>
</evidence>
<evidence type="ECO:0007744" key="23">
    <source>
        <dbReference type="PDB" id="3AQ4"/>
    </source>
</evidence>
<evidence type="ECO:0007829" key="24">
    <source>
        <dbReference type="PDB" id="3AQ4"/>
    </source>
</evidence>
<dbReference type="EC" id="3.6.5.2" evidence="2"/>
<dbReference type="EMBL" id="M95166">
    <property type="protein sequence ID" value="AAA32729.1"/>
    <property type="molecule type" value="mRNA"/>
</dbReference>
<dbReference type="EMBL" id="AC002337">
    <property type="protein sequence ID" value="AAB63817.1"/>
    <property type="molecule type" value="Genomic_DNA"/>
</dbReference>
<dbReference type="EMBL" id="AC007236">
    <property type="protein sequence ID" value="AAM15469.1"/>
    <property type="molecule type" value="Genomic_DNA"/>
</dbReference>
<dbReference type="EMBL" id="CP002685">
    <property type="protein sequence ID" value="AEC10810.1"/>
    <property type="molecule type" value="Genomic_DNA"/>
</dbReference>
<dbReference type="EMBL" id="CP002685">
    <property type="protein sequence ID" value="ANM62132.1"/>
    <property type="molecule type" value="Genomic_DNA"/>
</dbReference>
<dbReference type="EMBL" id="CP002685">
    <property type="protein sequence ID" value="ANM62133.1"/>
    <property type="molecule type" value="Genomic_DNA"/>
</dbReference>
<dbReference type="EMBL" id="AY074859">
    <property type="protein sequence ID" value="AAL75910.1"/>
    <property type="molecule type" value="mRNA"/>
</dbReference>
<dbReference type="EMBL" id="AY142032">
    <property type="protein sequence ID" value="AAM98296.1"/>
    <property type="molecule type" value="mRNA"/>
</dbReference>
<dbReference type="EMBL" id="AY087342">
    <property type="protein sequence ID" value="AAM64892.1"/>
    <property type="molecule type" value="mRNA"/>
</dbReference>
<dbReference type="PIR" id="S28875">
    <property type="entry name" value="S28875"/>
</dbReference>
<dbReference type="RefSeq" id="NP_001324310.1">
    <property type="nucleotide sequence ID" value="NM_001337250.1"/>
</dbReference>
<dbReference type="RefSeq" id="NP_001324311.1">
    <property type="nucleotide sequence ID" value="NM_001337251.1"/>
</dbReference>
<dbReference type="RefSeq" id="NP_182239.1">
    <property type="nucleotide sequence ID" value="NM_130285.3"/>
</dbReference>
<dbReference type="PDB" id="3AQ4">
    <property type="method" value="X-ray"/>
    <property type="resolution" value="1.80 A"/>
    <property type="chains" value="A/B=1-181"/>
</dbReference>
<dbReference type="PDBsum" id="3AQ4"/>
<dbReference type="SMR" id="P36397"/>
<dbReference type="BioGRID" id="4665">
    <property type="interactions" value="1"/>
</dbReference>
<dbReference type="FunCoup" id="P36397">
    <property type="interactions" value="4607"/>
</dbReference>
<dbReference type="IntAct" id="P36397">
    <property type="interactions" value="1"/>
</dbReference>
<dbReference type="MINT" id="P36397"/>
<dbReference type="STRING" id="3702.P36397"/>
<dbReference type="iPTMnet" id="P36397"/>
<dbReference type="PaxDb" id="3702-AT2G47170.1"/>
<dbReference type="ProteomicsDB" id="240326"/>
<dbReference type="EnsemblPlants" id="AT2G47170.1">
    <property type="protein sequence ID" value="AT2G47170.1"/>
    <property type="gene ID" value="AT2G47170"/>
</dbReference>
<dbReference type="EnsemblPlants" id="AT2G47170.2">
    <property type="protein sequence ID" value="AT2G47170.2"/>
    <property type="gene ID" value="AT2G47170"/>
</dbReference>
<dbReference type="EnsemblPlants" id="AT2G47170.3">
    <property type="protein sequence ID" value="AT2G47170.3"/>
    <property type="gene ID" value="AT2G47170"/>
</dbReference>
<dbReference type="GeneID" id="819330"/>
<dbReference type="Gramene" id="AT2G47170.1">
    <property type="protein sequence ID" value="AT2G47170.1"/>
    <property type="gene ID" value="AT2G47170"/>
</dbReference>
<dbReference type="Gramene" id="AT2G47170.2">
    <property type="protein sequence ID" value="AT2G47170.2"/>
    <property type="gene ID" value="AT2G47170"/>
</dbReference>
<dbReference type="Gramene" id="AT2G47170.3">
    <property type="protein sequence ID" value="AT2G47170.3"/>
    <property type="gene ID" value="AT2G47170"/>
</dbReference>
<dbReference type="KEGG" id="ath:AT2G47170"/>
<dbReference type="Araport" id="AT2G47170"/>
<dbReference type="TAIR" id="AT2G47170">
    <property type="gene designation" value="ARF1A1C"/>
</dbReference>
<dbReference type="eggNOG" id="KOG0070">
    <property type="taxonomic scope" value="Eukaryota"/>
</dbReference>
<dbReference type="HOGENOM" id="CLU_040729_9_3_1"/>
<dbReference type="InParanoid" id="P36397"/>
<dbReference type="OMA" id="ETISRCH"/>
<dbReference type="OrthoDB" id="1027437at2759"/>
<dbReference type="PhylomeDB" id="P36397"/>
<dbReference type="CD-CODE" id="4299E36E">
    <property type="entry name" value="Nucleolus"/>
</dbReference>
<dbReference type="EvolutionaryTrace" id="P36397"/>
<dbReference type="PRO" id="PR:P36397"/>
<dbReference type="Proteomes" id="UP000006548">
    <property type="component" value="Chromosome 2"/>
</dbReference>
<dbReference type="ExpressionAtlas" id="P36397">
    <property type="expression patterns" value="baseline and differential"/>
</dbReference>
<dbReference type="GO" id="GO:0005829">
    <property type="term" value="C:cytosol"/>
    <property type="evidence" value="ECO:0007005"/>
    <property type="project" value="TAIR"/>
</dbReference>
<dbReference type="GO" id="GO:0005769">
    <property type="term" value="C:early endosome"/>
    <property type="evidence" value="ECO:0000314"/>
    <property type="project" value="UniProtKB"/>
</dbReference>
<dbReference type="GO" id="GO:0005794">
    <property type="term" value="C:Golgi apparatus"/>
    <property type="evidence" value="ECO:0000314"/>
    <property type="project" value="UniProtKB"/>
</dbReference>
<dbReference type="GO" id="GO:0005802">
    <property type="term" value="C:trans-Golgi network"/>
    <property type="evidence" value="ECO:0000314"/>
    <property type="project" value="UniProtKB"/>
</dbReference>
<dbReference type="GO" id="GO:0005525">
    <property type="term" value="F:GTP binding"/>
    <property type="evidence" value="ECO:0000250"/>
    <property type="project" value="TAIR"/>
</dbReference>
<dbReference type="GO" id="GO:0003924">
    <property type="term" value="F:GTPase activity"/>
    <property type="evidence" value="ECO:0007669"/>
    <property type="project" value="InterPro"/>
</dbReference>
<dbReference type="GO" id="GO:0003729">
    <property type="term" value="F:mRNA binding"/>
    <property type="evidence" value="ECO:0000314"/>
    <property type="project" value="TAIR"/>
</dbReference>
<dbReference type="GO" id="GO:0016004">
    <property type="term" value="F:phospholipase activator activity"/>
    <property type="evidence" value="ECO:0000304"/>
    <property type="project" value="TAIR"/>
</dbReference>
<dbReference type="GO" id="GO:0009734">
    <property type="term" value="P:auxin-activated signaling pathway"/>
    <property type="evidence" value="ECO:0007669"/>
    <property type="project" value="UniProtKB-KW"/>
</dbReference>
<dbReference type="GO" id="GO:0015031">
    <property type="term" value="P:protein transport"/>
    <property type="evidence" value="ECO:0007669"/>
    <property type="project" value="UniProtKB-KW"/>
</dbReference>
<dbReference type="GO" id="GO:0090354">
    <property type="term" value="P:regulation of auxin metabolic process"/>
    <property type="evidence" value="ECO:0000315"/>
    <property type="project" value="UniProtKB"/>
</dbReference>
<dbReference type="GO" id="GO:0031001">
    <property type="term" value="P:response to brefeldin A"/>
    <property type="evidence" value="ECO:0000315"/>
    <property type="project" value="UniProtKB"/>
</dbReference>
<dbReference type="GO" id="GO:0098876">
    <property type="term" value="P:vesicle-mediated transport to the plasma membrane"/>
    <property type="evidence" value="ECO:0000315"/>
    <property type="project" value="UniProtKB"/>
</dbReference>
<dbReference type="CDD" id="cd04150">
    <property type="entry name" value="Arf1_5_like"/>
    <property type="match status" value="1"/>
</dbReference>
<dbReference type="FunFam" id="3.40.50.300:FF:003500">
    <property type="entry name" value="ADP-ribosylation factor 1"/>
    <property type="match status" value="1"/>
</dbReference>
<dbReference type="Gene3D" id="3.40.50.300">
    <property type="entry name" value="P-loop containing nucleotide triphosphate hydrolases"/>
    <property type="match status" value="1"/>
</dbReference>
<dbReference type="InterPro" id="IPR045872">
    <property type="entry name" value="Arf1-5-like"/>
</dbReference>
<dbReference type="InterPro" id="IPR027417">
    <property type="entry name" value="P-loop_NTPase"/>
</dbReference>
<dbReference type="InterPro" id="IPR005225">
    <property type="entry name" value="Small_GTP-bd"/>
</dbReference>
<dbReference type="InterPro" id="IPR024156">
    <property type="entry name" value="Small_GTPase_ARF"/>
</dbReference>
<dbReference type="InterPro" id="IPR006689">
    <property type="entry name" value="Small_GTPase_ARF/SAR"/>
</dbReference>
<dbReference type="NCBIfam" id="TIGR00231">
    <property type="entry name" value="small_GTP"/>
    <property type="match status" value="1"/>
</dbReference>
<dbReference type="PANTHER" id="PTHR11711">
    <property type="entry name" value="ADP RIBOSYLATION FACTOR-RELATED"/>
    <property type="match status" value="1"/>
</dbReference>
<dbReference type="Pfam" id="PF00025">
    <property type="entry name" value="Arf"/>
    <property type="match status" value="1"/>
</dbReference>
<dbReference type="PRINTS" id="PR00328">
    <property type="entry name" value="SAR1GTPBP"/>
</dbReference>
<dbReference type="SMART" id="SM00177">
    <property type="entry name" value="ARF"/>
    <property type="match status" value="1"/>
</dbReference>
<dbReference type="SMART" id="SM00175">
    <property type="entry name" value="RAB"/>
    <property type="match status" value="1"/>
</dbReference>
<dbReference type="SMART" id="SM00178">
    <property type="entry name" value="SAR"/>
    <property type="match status" value="1"/>
</dbReference>
<dbReference type="SUPFAM" id="SSF52540">
    <property type="entry name" value="P-loop containing nucleoside triphosphate hydrolases"/>
    <property type="match status" value="1"/>
</dbReference>
<dbReference type="PROSITE" id="PS51417">
    <property type="entry name" value="ARF"/>
    <property type="match status" value="1"/>
</dbReference>